<comment type="function">
    <text evidence="1">Catalyzes the ATP-dependent conversion of 7-carboxy-7-deazaguanine (CDG) to 7-cyano-7-deazaguanine (preQ(0)).</text>
</comment>
<comment type="catalytic activity">
    <reaction evidence="1">
        <text>7-carboxy-7-deazaguanine + NH4(+) + ATP = 7-cyano-7-deazaguanine + ADP + phosphate + H2O + H(+)</text>
        <dbReference type="Rhea" id="RHEA:27982"/>
        <dbReference type="ChEBI" id="CHEBI:15377"/>
        <dbReference type="ChEBI" id="CHEBI:15378"/>
        <dbReference type="ChEBI" id="CHEBI:28938"/>
        <dbReference type="ChEBI" id="CHEBI:30616"/>
        <dbReference type="ChEBI" id="CHEBI:43474"/>
        <dbReference type="ChEBI" id="CHEBI:45075"/>
        <dbReference type="ChEBI" id="CHEBI:61036"/>
        <dbReference type="ChEBI" id="CHEBI:456216"/>
        <dbReference type="EC" id="6.3.4.20"/>
    </reaction>
</comment>
<comment type="cofactor">
    <cofactor evidence="1">
        <name>Zn(2+)</name>
        <dbReference type="ChEBI" id="CHEBI:29105"/>
    </cofactor>
    <text evidence="1">Binds 1 zinc ion per subunit.</text>
</comment>
<comment type="pathway">
    <text evidence="1">Purine metabolism; 7-cyano-7-deazaguanine biosynthesis.</text>
</comment>
<comment type="subunit">
    <text evidence="1">Homodimer.</text>
</comment>
<comment type="similarity">
    <text evidence="1">Belongs to the QueC family.</text>
</comment>
<accession>C3LAL0</accession>
<dbReference type="EC" id="6.3.4.20" evidence="1"/>
<dbReference type="EMBL" id="CP001215">
    <property type="protein sequence ID" value="ACP12929.1"/>
    <property type="molecule type" value="Genomic_DNA"/>
</dbReference>
<dbReference type="RefSeq" id="WP_000711603.1">
    <property type="nucleotide sequence ID" value="NC_012581.1"/>
</dbReference>
<dbReference type="SMR" id="C3LAL0"/>
<dbReference type="GeneID" id="45021343"/>
<dbReference type="KEGG" id="bah:BAMEG_3236"/>
<dbReference type="HOGENOM" id="CLU_081854_0_0_9"/>
<dbReference type="UniPathway" id="UPA00391"/>
<dbReference type="GO" id="GO:0005524">
    <property type="term" value="F:ATP binding"/>
    <property type="evidence" value="ECO:0007669"/>
    <property type="project" value="UniProtKB-UniRule"/>
</dbReference>
<dbReference type="GO" id="GO:0016879">
    <property type="term" value="F:ligase activity, forming carbon-nitrogen bonds"/>
    <property type="evidence" value="ECO:0007669"/>
    <property type="project" value="UniProtKB-UniRule"/>
</dbReference>
<dbReference type="GO" id="GO:0008270">
    <property type="term" value="F:zinc ion binding"/>
    <property type="evidence" value="ECO:0007669"/>
    <property type="project" value="UniProtKB-UniRule"/>
</dbReference>
<dbReference type="GO" id="GO:0008616">
    <property type="term" value="P:queuosine biosynthetic process"/>
    <property type="evidence" value="ECO:0007669"/>
    <property type="project" value="UniProtKB-UniRule"/>
</dbReference>
<dbReference type="CDD" id="cd01995">
    <property type="entry name" value="QueC-like"/>
    <property type="match status" value="1"/>
</dbReference>
<dbReference type="FunFam" id="3.40.50.620:FF:000017">
    <property type="entry name" value="7-cyano-7-deazaguanine synthase"/>
    <property type="match status" value="1"/>
</dbReference>
<dbReference type="Gene3D" id="3.40.50.620">
    <property type="entry name" value="HUPs"/>
    <property type="match status" value="1"/>
</dbReference>
<dbReference type="HAMAP" id="MF_01633">
    <property type="entry name" value="QueC"/>
    <property type="match status" value="1"/>
</dbReference>
<dbReference type="InterPro" id="IPR018317">
    <property type="entry name" value="QueC"/>
</dbReference>
<dbReference type="InterPro" id="IPR014729">
    <property type="entry name" value="Rossmann-like_a/b/a_fold"/>
</dbReference>
<dbReference type="NCBIfam" id="TIGR00364">
    <property type="entry name" value="7-cyano-7-deazaguanine synthase QueC"/>
    <property type="match status" value="1"/>
</dbReference>
<dbReference type="PANTHER" id="PTHR42914">
    <property type="entry name" value="7-CYANO-7-DEAZAGUANINE SYNTHASE"/>
    <property type="match status" value="1"/>
</dbReference>
<dbReference type="PANTHER" id="PTHR42914:SF1">
    <property type="entry name" value="7-CYANO-7-DEAZAGUANINE SYNTHASE"/>
    <property type="match status" value="1"/>
</dbReference>
<dbReference type="Pfam" id="PF06508">
    <property type="entry name" value="QueC"/>
    <property type="match status" value="1"/>
</dbReference>
<dbReference type="PIRSF" id="PIRSF006293">
    <property type="entry name" value="ExsB"/>
    <property type="match status" value="1"/>
</dbReference>
<dbReference type="SUPFAM" id="SSF52402">
    <property type="entry name" value="Adenine nucleotide alpha hydrolases-like"/>
    <property type="match status" value="1"/>
</dbReference>
<protein>
    <recommendedName>
        <fullName evidence="1">7-cyano-7-deazaguanine synthase</fullName>
        <ecNumber evidence="1">6.3.4.20</ecNumber>
    </recommendedName>
    <alternativeName>
        <fullName evidence="1">7-cyano-7-carbaguanine synthase</fullName>
    </alternativeName>
    <alternativeName>
        <fullName evidence="1">PreQ(0) synthase</fullName>
    </alternativeName>
    <alternativeName>
        <fullName evidence="1">Queuosine biosynthesis protein QueC</fullName>
    </alternativeName>
</protein>
<sequence>MKKEKAVVVFSGGQDSTTCLFWAIEQFAEVEAVTFNYNQRHKLEIDCAVEIAKELGIKHTVLDMSLLNQLAPNALTRTDMEITHEEGELPSTFVDGRNLLFLSFAAVLAKQVGARHIVTGVCETDFSGYPDCRDVFVKSLNVTLNLSMDYPFVIHTPLMWIDKAETWKLSDELGAFEFVREKTLTCYNGIIGDGCGECPACQLRKAGLDTYLQEREGASN</sequence>
<keyword id="KW-0067">ATP-binding</keyword>
<keyword id="KW-0436">Ligase</keyword>
<keyword id="KW-0479">Metal-binding</keyword>
<keyword id="KW-0547">Nucleotide-binding</keyword>
<keyword id="KW-0671">Queuosine biosynthesis</keyword>
<keyword id="KW-0862">Zinc</keyword>
<gene>
    <name evidence="1" type="primary">queC</name>
    <name type="ordered locus">BAMEG_3236</name>
</gene>
<reference key="1">
    <citation type="submission" date="2008-10" db="EMBL/GenBank/DDBJ databases">
        <title>Genome sequence of Bacillus anthracis str. CDC 684.</title>
        <authorList>
            <person name="Dodson R.J."/>
            <person name="Munk A.C."/>
            <person name="Brettin T."/>
            <person name="Bruce D."/>
            <person name="Detter C."/>
            <person name="Tapia R."/>
            <person name="Han C."/>
            <person name="Sutton G."/>
            <person name="Sims D."/>
        </authorList>
    </citation>
    <scope>NUCLEOTIDE SEQUENCE [LARGE SCALE GENOMIC DNA]</scope>
    <source>
        <strain>CDC 684 / NRRL 3495</strain>
    </source>
</reference>
<name>QUEC_BACAC</name>
<feature type="chain" id="PRO_1000186554" description="7-cyano-7-deazaguanine synthase">
    <location>
        <begin position="1"/>
        <end position="220"/>
    </location>
</feature>
<feature type="binding site" evidence="1">
    <location>
        <begin position="10"/>
        <end position="20"/>
    </location>
    <ligand>
        <name>ATP</name>
        <dbReference type="ChEBI" id="CHEBI:30616"/>
    </ligand>
</feature>
<feature type="binding site" evidence="1">
    <location>
        <position position="186"/>
    </location>
    <ligand>
        <name>Zn(2+)</name>
        <dbReference type="ChEBI" id="CHEBI:29105"/>
    </ligand>
</feature>
<feature type="binding site" evidence="1">
    <location>
        <position position="195"/>
    </location>
    <ligand>
        <name>Zn(2+)</name>
        <dbReference type="ChEBI" id="CHEBI:29105"/>
    </ligand>
</feature>
<feature type="binding site" evidence="1">
    <location>
        <position position="198"/>
    </location>
    <ligand>
        <name>Zn(2+)</name>
        <dbReference type="ChEBI" id="CHEBI:29105"/>
    </ligand>
</feature>
<feature type="binding site" evidence="1">
    <location>
        <position position="201"/>
    </location>
    <ligand>
        <name>Zn(2+)</name>
        <dbReference type="ChEBI" id="CHEBI:29105"/>
    </ligand>
</feature>
<proteinExistence type="inferred from homology"/>
<organism>
    <name type="scientific">Bacillus anthracis (strain CDC 684 / NRRL 3495)</name>
    <dbReference type="NCBI Taxonomy" id="568206"/>
    <lineage>
        <taxon>Bacteria</taxon>
        <taxon>Bacillati</taxon>
        <taxon>Bacillota</taxon>
        <taxon>Bacilli</taxon>
        <taxon>Bacillales</taxon>
        <taxon>Bacillaceae</taxon>
        <taxon>Bacillus</taxon>
        <taxon>Bacillus cereus group</taxon>
    </lineage>
</organism>
<evidence type="ECO:0000255" key="1">
    <source>
        <dbReference type="HAMAP-Rule" id="MF_01633"/>
    </source>
</evidence>